<gene>
    <name evidence="1" type="primary">gpsA</name>
    <name type="ordered locus">GM21_0007</name>
</gene>
<keyword id="KW-0963">Cytoplasm</keyword>
<keyword id="KW-0444">Lipid biosynthesis</keyword>
<keyword id="KW-0443">Lipid metabolism</keyword>
<keyword id="KW-0520">NAD</keyword>
<keyword id="KW-0521">NADP</keyword>
<keyword id="KW-0547">Nucleotide-binding</keyword>
<keyword id="KW-0560">Oxidoreductase</keyword>
<keyword id="KW-0594">Phospholipid biosynthesis</keyword>
<keyword id="KW-1208">Phospholipid metabolism</keyword>
<sequence>MAEKIAVIGAGSWGTTLADLLAKKGHEVTLWAYEPELVLEMRDTRENSLFLPGIKLNEGLAFTNDLAQAYRGCSMVLCVVPSQLVRRVMTNSLPFLPREAVIVSASKGIEVDTLATVSEIYQEILPPEQYRNLAALSGPSFAREVALEMPTAVTAAASTEAVARRVQEAFTTSYFRVYRNSDVVGVELGGAIKNVIAIAAGISDGLGFGSNTRAALITRGLAEMTRLGVAMGAQPSTFAGLAGMGDLVLTCTGDLSRNRSVGIQIGQGRTLSEILGEMRMVAEGVKTTESAYNLAKKLGVEMPIIEQMYQMLYQSKPAREAVLELMTRNLKAEGV</sequence>
<evidence type="ECO:0000255" key="1">
    <source>
        <dbReference type="HAMAP-Rule" id="MF_00394"/>
    </source>
</evidence>
<accession>C6E7R1</accession>
<feature type="chain" id="PRO_1000205861" description="Glycerol-3-phosphate dehydrogenase [NAD(P)+]">
    <location>
        <begin position="1"/>
        <end position="335"/>
    </location>
</feature>
<feature type="active site" description="Proton acceptor" evidence="1">
    <location>
        <position position="193"/>
    </location>
</feature>
<feature type="binding site" evidence="1">
    <location>
        <position position="12"/>
    </location>
    <ligand>
        <name>NADPH</name>
        <dbReference type="ChEBI" id="CHEBI:57783"/>
    </ligand>
</feature>
<feature type="binding site" evidence="1">
    <location>
        <position position="13"/>
    </location>
    <ligand>
        <name>NADPH</name>
        <dbReference type="ChEBI" id="CHEBI:57783"/>
    </ligand>
</feature>
<feature type="binding site" evidence="1">
    <location>
        <position position="107"/>
    </location>
    <ligand>
        <name>NADPH</name>
        <dbReference type="ChEBI" id="CHEBI:57783"/>
    </ligand>
</feature>
<feature type="binding site" evidence="1">
    <location>
        <position position="107"/>
    </location>
    <ligand>
        <name>sn-glycerol 3-phosphate</name>
        <dbReference type="ChEBI" id="CHEBI:57597"/>
    </ligand>
</feature>
<feature type="binding site" evidence="1">
    <location>
        <position position="138"/>
    </location>
    <ligand>
        <name>sn-glycerol 3-phosphate</name>
        <dbReference type="ChEBI" id="CHEBI:57597"/>
    </ligand>
</feature>
<feature type="binding site" evidence="1">
    <location>
        <position position="140"/>
    </location>
    <ligand>
        <name>sn-glycerol 3-phosphate</name>
        <dbReference type="ChEBI" id="CHEBI:57597"/>
    </ligand>
</feature>
<feature type="binding site" evidence="1">
    <location>
        <position position="142"/>
    </location>
    <ligand>
        <name>NADPH</name>
        <dbReference type="ChEBI" id="CHEBI:57783"/>
    </ligand>
</feature>
<feature type="binding site" evidence="1">
    <location>
        <position position="193"/>
    </location>
    <ligand>
        <name>sn-glycerol 3-phosphate</name>
        <dbReference type="ChEBI" id="CHEBI:57597"/>
    </ligand>
</feature>
<feature type="binding site" evidence="1">
    <location>
        <position position="246"/>
    </location>
    <ligand>
        <name>sn-glycerol 3-phosphate</name>
        <dbReference type="ChEBI" id="CHEBI:57597"/>
    </ligand>
</feature>
<feature type="binding site" evidence="1">
    <location>
        <position position="256"/>
    </location>
    <ligand>
        <name>sn-glycerol 3-phosphate</name>
        <dbReference type="ChEBI" id="CHEBI:57597"/>
    </ligand>
</feature>
<feature type="binding site" evidence="1">
    <location>
        <position position="257"/>
    </location>
    <ligand>
        <name>NADPH</name>
        <dbReference type="ChEBI" id="CHEBI:57783"/>
    </ligand>
</feature>
<feature type="binding site" evidence="1">
    <location>
        <position position="257"/>
    </location>
    <ligand>
        <name>sn-glycerol 3-phosphate</name>
        <dbReference type="ChEBI" id="CHEBI:57597"/>
    </ligand>
</feature>
<feature type="binding site" evidence="1">
    <location>
        <position position="258"/>
    </location>
    <ligand>
        <name>sn-glycerol 3-phosphate</name>
        <dbReference type="ChEBI" id="CHEBI:57597"/>
    </ligand>
</feature>
<feature type="binding site" evidence="1">
    <location>
        <position position="281"/>
    </location>
    <ligand>
        <name>NADPH</name>
        <dbReference type="ChEBI" id="CHEBI:57783"/>
    </ligand>
</feature>
<feature type="binding site" evidence="1">
    <location>
        <position position="283"/>
    </location>
    <ligand>
        <name>NADPH</name>
        <dbReference type="ChEBI" id="CHEBI:57783"/>
    </ligand>
</feature>
<dbReference type="EC" id="1.1.1.94" evidence="1"/>
<dbReference type="EMBL" id="CP001661">
    <property type="protein sequence ID" value="ACT16094.1"/>
    <property type="molecule type" value="Genomic_DNA"/>
</dbReference>
<dbReference type="SMR" id="C6E7R1"/>
<dbReference type="STRING" id="443144.GM21_0007"/>
<dbReference type="KEGG" id="gem:GM21_0007"/>
<dbReference type="eggNOG" id="COG0240">
    <property type="taxonomic scope" value="Bacteria"/>
</dbReference>
<dbReference type="HOGENOM" id="CLU_033449_0_2_7"/>
<dbReference type="OrthoDB" id="9812273at2"/>
<dbReference type="UniPathway" id="UPA00940"/>
<dbReference type="GO" id="GO:0005829">
    <property type="term" value="C:cytosol"/>
    <property type="evidence" value="ECO:0007669"/>
    <property type="project" value="TreeGrafter"/>
</dbReference>
<dbReference type="GO" id="GO:0047952">
    <property type="term" value="F:glycerol-3-phosphate dehydrogenase [NAD(P)+] activity"/>
    <property type="evidence" value="ECO:0007669"/>
    <property type="project" value="UniProtKB-UniRule"/>
</dbReference>
<dbReference type="GO" id="GO:0051287">
    <property type="term" value="F:NAD binding"/>
    <property type="evidence" value="ECO:0007669"/>
    <property type="project" value="InterPro"/>
</dbReference>
<dbReference type="GO" id="GO:0005975">
    <property type="term" value="P:carbohydrate metabolic process"/>
    <property type="evidence" value="ECO:0007669"/>
    <property type="project" value="InterPro"/>
</dbReference>
<dbReference type="GO" id="GO:0046167">
    <property type="term" value="P:glycerol-3-phosphate biosynthetic process"/>
    <property type="evidence" value="ECO:0007669"/>
    <property type="project" value="UniProtKB-UniRule"/>
</dbReference>
<dbReference type="GO" id="GO:0046168">
    <property type="term" value="P:glycerol-3-phosphate catabolic process"/>
    <property type="evidence" value="ECO:0007669"/>
    <property type="project" value="InterPro"/>
</dbReference>
<dbReference type="GO" id="GO:0006650">
    <property type="term" value="P:glycerophospholipid metabolic process"/>
    <property type="evidence" value="ECO:0007669"/>
    <property type="project" value="UniProtKB-UniRule"/>
</dbReference>
<dbReference type="GO" id="GO:0008654">
    <property type="term" value="P:phospholipid biosynthetic process"/>
    <property type="evidence" value="ECO:0007669"/>
    <property type="project" value="UniProtKB-KW"/>
</dbReference>
<dbReference type="FunFam" id="1.10.1040.10:FF:000001">
    <property type="entry name" value="Glycerol-3-phosphate dehydrogenase [NAD(P)+]"/>
    <property type="match status" value="1"/>
</dbReference>
<dbReference type="FunFam" id="3.40.50.720:FF:000019">
    <property type="entry name" value="Glycerol-3-phosphate dehydrogenase [NAD(P)+]"/>
    <property type="match status" value="1"/>
</dbReference>
<dbReference type="Gene3D" id="1.10.1040.10">
    <property type="entry name" value="N-(1-d-carboxylethyl)-l-norvaline Dehydrogenase, domain 2"/>
    <property type="match status" value="1"/>
</dbReference>
<dbReference type="Gene3D" id="3.40.50.720">
    <property type="entry name" value="NAD(P)-binding Rossmann-like Domain"/>
    <property type="match status" value="1"/>
</dbReference>
<dbReference type="HAMAP" id="MF_00394">
    <property type="entry name" value="NAD_Glyc3P_dehydrog"/>
    <property type="match status" value="1"/>
</dbReference>
<dbReference type="InterPro" id="IPR008927">
    <property type="entry name" value="6-PGluconate_DH-like_C_sf"/>
</dbReference>
<dbReference type="InterPro" id="IPR013328">
    <property type="entry name" value="6PGD_dom2"/>
</dbReference>
<dbReference type="InterPro" id="IPR006168">
    <property type="entry name" value="G3P_DH_NAD-dep"/>
</dbReference>
<dbReference type="InterPro" id="IPR006109">
    <property type="entry name" value="G3P_DH_NAD-dep_C"/>
</dbReference>
<dbReference type="InterPro" id="IPR011128">
    <property type="entry name" value="G3P_DH_NAD-dep_N"/>
</dbReference>
<dbReference type="InterPro" id="IPR036291">
    <property type="entry name" value="NAD(P)-bd_dom_sf"/>
</dbReference>
<dbReference type="NCBIfam" id="NF000940">
    <property type="entry name" value="PRK00094.1-2"/>
    <property type="match status" value="1"/>
</dbReference>
<dbReference type="NCBIfam" id="NF000941">
    <property type="entry name" value="PRK00094.1-3"/>
    <property type="match status" value="1"/>
</dbReference>
<dbReference type="NCBIfam" id="NF000942">
    <property type="entry name" value="PRK00094.1-4"/>
    <property type="match status" value="1"/>
</dbReference>
<dbReference type="PANTHER" id="PTHR11728">
    <property type="entry name" value="GLYCEROL-3-PHOSPHATE DEHYDROGENASE"/>
    <property type="match status" value="1"/>
</dbReference>
<dbReference type="PANTHER" id="PTHR11728:SF1">
    <property type="entry name" value="GLYCEROL-3-PHOSPHATE DEHYDROGENASE [NAD(+)] 2, CHLOROPLASTIC"/>
    <property type="match status" value="1"/>
</dbReference>
<dbReference type="Pfam" id="PF07479">
    <property type="entry name" value="NAD_Gly3P_dh_C"/>
    <property type="match status" value="1"/>
</dbReference>
<dbReference type="Pfam" id="PF01210">
    <property type="entry name" value="NAD_Gly3P_dh_N"/>
    <property type="match status" value="1"/>
</dbReference>
<dbReference type="PIRSF" id="PIRSF000114">
    <property type="entry name" value="Glycerol-3-P_dh"/>
    <property type="match status" value="1"/>
</dbReference>
<dbReference type="PRINTS" id="PR00077">
    <property type="entry name" value="GPDHDRGNASE"/>
</dbReference>
<dbReference type="SUPFAM" id="SSF48179">
    <property type="entry name" value="6-phosphogluconate dehydrogenase C-terminal domain-like"/>
    <property type="match status" value="1"/>
</dbReference>
<dbReference type="SUPFAM" id="SSF51735">
    <property type="entry name" value="NAD(P)-binding Rossmann-fold domains"/>
    <property type="match status" value="1"/>
</dbReference>
<dbReference type="PROSITE" id="PS00957">
    <property type="entry name" value="NAD_G3PDH"/>
    <property type="match status" value="1"/>
</dbReference>
<name>GPDA_GEOSM</name>
<reference key="1">
    <citation type="submission" date="2009-07" db="EMBL/GenBank/DDBJ databases">
        <title>Complete sequence of Geobacter sp. M21.</title>
        <authorList>
            <consortium name="US DOE Joint Genome Institute"/>
            <person name="Lucas S."/>
            <person name="Copeland A."/>
            <person name="Lapidus A."/>
            <person name="Glavina del Rio T."/>
            <person name="Dalin E."/>
            <person name="Tice H."/>
            <person name="Bruce D."/>
            <person name="Goodwin L."/>
            <person name="Pitluck S."/>
            <person name="Saunders E."/>
            <person name="Brettin T."/>
            <person name="Detter J.C."/>
            <person name="Han C."/>
            <person name="Larimer F."/>
            <person name="Land M."/>
            <person name="Hauser L."/>
            <person name="Kyrpides N."/>
            <person name="Ovchinnikova G."/>
            <person name="Lovley D."/>
        </authorList>
    </citation>
    <scope>NUCLEOTIDE SEQUENCE [LARGE SCALE GENOMIC DNA]</scope>
    <source>
        <strain>M21</strain>
    </source>
</reference>
<protein>
    <recommendedName>
        <fullName evidence="1">Glycerol-3-phosphate dehydrogenase [NAD(P)+]</fullName>
        <ecNumber evidence="1">1.1.1.94</ecNumber>
    </recommendedName>
    <alternativeName>
        <fullName evidence="1">NAD(P)(+)-dependent glycerol-3-phosphate dehydrogenase</fullName>
    </alternativeName>
    <alternativeName>
        <fullName evidence="1">NAD(P)H-dependent dihydroxyacetone-phosphate reductase</fullName>
    </alternativeName>
</protein>
<proteinExistence type="inferred from homology"/>
<comment type="function">
    <text evidence="1">Catalyzes the reduction of the glycolytic intermediate dihydroxyacetone phosphate (DHAP) to sn-glycerol 3-phosphate (G3P), the key precursor for phospholipid synthesis.</text>
</comment>
<comment type="catalytic activity">
    <reaction evidence="1">
        <text>sn-glycerol 3-phosphate + NAD(+) = dihydroxyacetone phosphate + NADH + H(+)</text>
        <dbReference type="Rhea" id="RHEA:11092"/>
        <dbReference type="ChEBI" id="CHEBI:15378"/>
        <dbReference type="ChEBI" id="CHEBI:57540"/>
        <dbReference type="ChEBI" id="CHEBI:57597"/>
        <dbReference type="ChEBI" id="CHEBI:57642"/>
        <dbReference type="ChEBI" id="CHEBI:57945"/>
        <dbReference type="EC" id="1.1.1.94"/>
    </reaction>
    <physiologicalReaction direction="right-to-left" evidence="1">
        <dbReference type="Rhea" id="RHEA:11094"/>
    </physiologicalReaction>
</comment>
<comment type="catalytic activity">
    <reaction evidence="1">
        <text>sn-glycerol 3-phosphate + NADP(+) = dihydroxyacetone phosphate + NADPH + H(+)</text>
        <dbReference type="Rhea" id="RHEA:11096"/>
        <dbReference type="ChEBI" id="CHEBI:15378"/>
        <dbReference type="ChEBI" id="CHEBI:57597"/>
        <dbReference type="ChEBI" id="CHEBI:57642"/>
        <dbReference type="ChEBI" id="CHEBI:57783"/>
        <dbReference type="ChEBI" id="CHEBI:58349"/>
        <dbReference type="EC" id="1.1.1.94"/>
    </reaction>
    <physiologicalReaction direction="right-to-left" evidence="1">
        <dbReference type="Rhea" id="RHEA:11098"/>
    </physiologicalReaction>
</comment>
<comment type="pathway">
    <text evidence="1">Membrane lipid metabolism; glycerophospholipid metabolism.</text>
</comment>
<comment type="subcellular location">
    <subcellularLocation>
        <location evidence="1">Cytoplasm</location>
    </subcellularLocation>
</comment>
<comment type="similarity">
    <text evidence="1">Belongs to the NAD-dependent glycerol-3-phosphate dehydrogenase family.</text>
</comment>
<organism>
    <name type="scientific">Geobacter sp. (strain M21)</name>
    <dbReference type="NCBI Taxonomy" id="443144"/>
    <lineage>
        <taxon>Bacteria</taxon>
        <taxon>Pseudomonadati</taxon>
        <taxon>Thermodesulfobacteriota</taxon>
        <taxon>Desulfuromonadia</taxon>
        <taxon>Geobacterales</taxon>
        <taxon>Geobacteraceae</taxon>
        <taxon>Geobacter</taxon>
    </lineage>
</organism>